<protein>
    <recommendedName>
        <fullName>Squamosa promoter-binding-like protein 15</fullName>
    </recommendedName>
</protein>
<sequence>MELLMCSGQAESGGSSSTESSSLSGGLRFGQKIYFEDGSGSRSKNRVNTVRKSSTTARCQVEGCRMDLSNVKAYYSRHKVCCIHSKSSKVIVSGLHQRFCQQCSRFHQLSEFDLEKRSCRRRLACHNERRRKPQPTTALFTSHYSRIAPSLYGNPNAAMIKSVLGDPTAWSTARSVMQRPGPWQINPVRETHPHMNVLSHGSSSFTTCPEMINNNSTDSSCALSLLSNSYPIHQQQLQTPTNTWRPSSGFDSMISFSDKVTMAQPPPISTHQPPISTHQQYLSQTWEVIAGEKSNSHYMSPVSQISEPADFQISNGTTMGGFELYLHQQVLKQYMEPENTRAYDSSPQHFNWSL</sequence>
<accession>Q9M2Q6</accession>
<proteinExistence type="evidence at protein level"/>
<name>SPL15_ARATH</name>
<organism>
    <name type="scientific">Arabidopsis thaliana</name>
    <name type="common">Mouse-ear cress</name>
    <dbReference type="NCBI Taxonomy" id="3702"/>
    <lineage>
        <taxon>Eukaryota</taxon>
        <taxon>Viridiplantae</taxon>
        <taxon>Streptophyta</taxon>
        <taxon>Embryophyta</taxon>
        <taxon>Tracheophyta</taxon>
        <taxon>Spermatophyta</taxon>
        <taxon>Magnoliopsida</taxon>
        <taxon>eudicotyledons</taxon>
        <taxon>Gunneridae</taxon>
        <taxon>Pentapetalae</taxon>
        <taxon>rosids</taxon>
        <taxon>malvids</taxon>
        <taxon>Brassicales</taxon>
        <taxon>Brassicaceae</taxon>
        <taxon>Camelineae</taxon>
        <taxon>Arabidopsis</taxon>
    </lineage>
</organism>
<reference key="1">
    <citation type="journal article" date="2000" name="Nature">
        <title>Sequence and analysis of chromosome 3 of the plant Arabidopsis thaliana.</title>
        <authorList>
            <person name="Salanoubat M."/>
            <person name="Lemcke K."/>
            <person name="Rieger M."/>
            <person name="Ansorge W."/>
            <person name="Unseld M."/>
            <person name="Fartmann B."/>
            <person name="Valle G."/>
            <person name="Bloecker H."/>
            <person name="Perez-Alonso M."/>
            <person name="Obermaier B."/>
            <person name="Delseny M."/>
            <person name="Boutry M."/>
            <person name="Grivell L.A."/>
            <person name="Mache R."/>
            <person name="Puigdomenech P."/>
            <person name="De Simone V."/>
            <person name="Choisne N."/>
            <person name="Artiguenave F."/>
            <person name="Robert C."/>
            <person name="Brottier P."/>
            <person name="Wincker P."/>
            <person name="Cattolico L."/>
            <person name="Weissenbach J."/>
            <person name="Saurin W."/>
            <person name="Quetier F."/>
            <person name="Schaefer M."/>
            <person name="Mueller-Auer S."/>
            <person name="Gabel C."/>
            <person name="Fuchs M."/>
            <person name="Benes V."/>
            <person name="Wurmbach E."/>
            <person name="Drzonek H."/>
            <person name="Erfle H."/>
            <person name="Jordan N."/>
            <person name="Bangert S."/>
            <person name="Wiedelmann R."/>
            <person name="Kranz H."/>
            <person name="Voss H."/>
            <person name="Holland R."/>
            <person name="Brandt P."/>
            <person name="Nyakatura G."/>
            <person name="Vezzi A."/>
            <person name="D'Angelo M."/>
            <person name="Pallavicini A."/>
            <person name="Toppo S."/>
            <person name="Simionati B."/>
            <person name="Conrad A."/>
            <person name="Hornischer K."/>
            <person name="Kauer G."/>
            <person name="Loehnert T.-H."/>
            <person name="Nordsiek G."/>
            <person name="Reichelt J."/>
            <person name="Scharfe M."/>
            <person name="Schoen O."/>
            <person name="Bargues M."/>
            <person name="Terol J."/>
            <person name="Climent J."/>
            <person name="Navarro P."/>
            <person name="Collado C."/>
            <person name="Perez-Perez A."/>
            <person name="Ottenwaelder B."/>
            <person name="Duchemin D."/>
            <person name="Cooke R."/>
            <person name="Laudie M."/>
            <person name="Berger-Llauro C."/>
            <person name="Purnelle B."/>
            <person name="Masuy D."/>
            <person name="de Haan M."/>
            <person name="Maarse A.C."/>
            <person name="Alcaraz J.-P."/>
            <person name="Cottet A."/>
            <person name="Casacuberta E."/>
            <person name="Monfort A."/>
            <person name="Argiriou A."/>
            <person name="Flores M."/>
            <person name="Liguori R."/>
            <person name="Vitale D."/>
            <person name="Mannhaupt G."/>
            <person name="Haase D."/>
            <person name="Schoof H."/>
            <person name="Rudd S."/>
            <person name="Zaccaria P."/>
            <person name="Mewes H.-W."/>
            <person name="Mayer K.F.X."/>
            <person name="Kaul S."/>
            <person name="Town C.D."/>
            <person name="Koo H.L."/>
            <person name="Tallon L.J."/>
            <person name="Jenkins J."/>
            <person name="Rooney T."/>
            <person name="Rizzo M."/>
            <person name="Walts A."/>
            <person name="Utterback T."/>
            <person name="Fujii C.Y."/>
            <person name="Shea T.P."/>
            <person name="Creasy T.H."/>
            <person name="Haas B."/>
            <person name="Maiti R."/>
            <person name="Wu D."/>
            <person name="Peterson J."/>
            <person name="Van Aken S."/>
            <person name="Pai G."/>
            <person name="Militscher J."/>
            <person name="Sellers P."/>
            <person name="Gill J.E."/>
            <person name="Feldblyum T.V."/>
            <person name="Preuss D."/>
            <person name="Lin X."/>
            <person name="Nierman W.C."/>
            <person name="Salzberg S.L."/>
            <person name="White O."/>
            <person name="Venter J.C."/>
            <person name="Fraser C.M."/>
            <person name="Kaneko T."/>
            <person name="Nakamura Y."/>
            <person name="Sato S."/>
            <person name="Kato T."/>
            <person name="Asamizu E."/>
            <person name="Sasamoto S."/>
            <person name="Kimura T."/>
            <person name="Idesawa K."/>
            <person name="Kawashima K."/>
            <person name="Kishida Y."/>
            <person name="Kiyokawa C."/>
            <person name="Kohara M."/>
            <person name="Matsumoto M."/>
            <person name="Matsuno A."/>
            <person name="Muraki A."/>
            <person name="Nakayama S."/>
            <person name="Nakazaki N."/>
            <person name="Shinpo S."/>
            <person name="Takeuchi C."/>
            <person name="Wada T."/>
            <person name="Watanabe A."/>
            <person name="Yamada M."/>
            <person name="Yasuda M."/>
            <person name="Tabata S."/>
        </authorList>
    </citation>
    <scope>NUCLEOTIDE SEQUENCE [LARGE SCALE GENOMIC DNA]</scope>
    <source>
        <strain>cv. Columbia</strain>
    </source>
</reference>
<reference key="2">
    <citation type="journal article" date="2017" name="Plant J.">
        <title>Araport11: a complete reannotation of the Arabidopsis thaliana reference genome.</title>
        <authorList>
            <person name="Cheng C.Y."/>
            <person name="Krishnakumar V."/>
            <person name="Chan A.P."/>
            <person name="Thibaud-Nissen F."/>
            <person name="Schobel S."/>
            <person name="Town C.D."/>
        </authorList>
    </citation>
    <scope>GENOME REANNOTATION</scope>
    <source>
        <strain>cv. Columbia</strain>
    </source>
</reference>
<reference key="3">
    <citation type="submission" date="2002-03" db="EMBL/GenBank/DDBJ databases">
        <title>Full-length cDNA from Arabidopsis thaliana.</title>
        <authorList>
            <person name="Brover V.V."/>
            <person name="Troukhan M.E."/>
            <person name="Alexandrov N.A."/>
            <person name="Lu Y.-P."/>
            <person name="Flavell R.B."/>
            <person name="Feldmann K.A."/>
        </authorList>
    </citation>
    <scope>NUCLEOTIDE SEQUENCE [LARGE SCALE MRNA]</scope>
</reference>
<reference key="4">
    <citation type="journal article" date="2002" name="Cell">
        <title>Prediction of plant microRNA targets.</title>
        <authorList>
            <person name="Rhoades M.W."/>
            <person name="Reinhart B.J."/>
            <person name="Lim L.P."/>
            <person name="Burge C.B."/>
            <person name="Bartel B."/>
            <person name="Bartel D.P."/>
        </authorList>
    </citation>
    <scope>INDUCTION</scope>
</reference>
<reference key="5">
    <citation type="journal article" date="2003" name="Development">
        <title>Dissection of floral induction pathways using global expression analysis.</title>
        <authorList>
            <person name="Schmid M."/>
            <person name="Uhlenhaut N.H."/>
            <person name="Godard F."/>
            <person name="Demar M."/>
            <person name="Bressan R."/>
            <person name="Weigel D."/>
            <person name="Lohmann J.U."/>
        </authorList>
    </citation>
    <scope>DEVELOPMENTAL STAGE</scope>
</reference>
<reference key="6">
    <citation type="journal article" date="2005" name="J. Mol. Biol.">
        <title>Functional dissection of the plant-specific SBP-domain: overlap of the DNA-binding and nuclear localization domains.</title>
        <authorList>
            <person name="Birkenbihl R.P."/>
            <person name="Jach G."/>
            <person name="Saedler H."/>
            <person name="Huijser P."/>
        </authorList>
    </citation>
    <scope>SUBCELLULAR LOCATION</scope>
</reference>
<feature type="chain" id="PRO_0000132736" description="Squamosa promoter-binding-like protein 15">
    <location>
        <begin position="1"/>
        <end position="354"/>
    </location>
</feature>
<feature type="zinc finger region" description="SBP-type" evidence="3">
    <location>
        <begin position="56"/>
        <end position="133"/>
    </location>
</feature>
<feature type="region of interest" description="Disordered" evidence="4">
    <location>
        <begin position="1"/>
        <end position="25"/>
    </location>
</feature>
<feature type="short sequence motif" description="Bipartite nuclear localization signal" evidence="2">
    <location>
        <begin position="116"/>
        <end position="132"/>
    </location>
</feature>
<feature type="compositionally biased region" description="Low complexity" evidence="4">
    <location>
        <begin position="7"/>
        <end position="25"/>
    </location>
</feature>
<feature type="binding site" evidence="3">
    <location>
        <position position="59"/>
    </location>
    <ligand>
        <name>Zn(2+)</name>
        <dbReference type="ChEBI" id="CHEBI:29105"/>
        <label>1</label>
    </ligand>
</feature>
<feature type="binding site" evidence="3">
    <location>
        <position position="64"/>
    </location>
    <ligand>
        <name>Zn(2+)</name>
        <dbReference type="ChEBI" id="CHEBI:29105"/>
        <label>1</label>
    </ligand>
</feature>
<feature type="binding site" evidence="3">
    <location>
        <position position="81"/>
    </location>
    <ligand>
        <name>Zn(2+)</name>
        <dbReference type="ChEBI" id="CHEBI:29105"/>
        <label>1</label>
    </ligand>
</feature>
<feature type="binding site" evidence="3">
    <location>
        <position position="84"/>
    </location>
    <ligand>
        <name>Zn(2+)</name>
        <dbReference type="ChEBI" id="CHEBI:29105"/>
        <label>1</label>
    </ligand>
</feature>
<feature type="binding site" evidence="3">
    <location>
        <position position="100"/>
    </location>
    <ligand>
        <name>Zn(2+)</name>
        <dbReference type="ChEBI" id="CHEBI:29105"/>
        <label>2</label>
    </ligand>
</feature>
<feature type="binding site" evidence="3">
    <location>
        <position position="103"/>
    </location>
    <ligand>
        <name>Zn(2+)</name>
        <dbReference type="ChEBI" id="CHEBI:29105"/>
        <label>2</label>
    </ligand>
</feature>
<feature type="binding site" evidence="3">
    <location>
        <position position="107"/>
    </location>
    <ligand>
        <name>Zn(2+)</name>
        <dbReference type="ChEBI" id="CHEBI:29105"/>
        <label>2</label>
    </ligand>
</feature>
<feature type="binding site" evidence="3">
    <location>
        <position position="119"/>
    </location>
    <ligand>
        <name>Zn(2+)</name>
        <dbReference type="ChEBI" id="CHEBI:29105"/>
        <label>2</label>
    </ligand>
</feature>
<dbReference type="EMBL" id="AL132977">
    <property type="protein sequence ID" value="CAB67620.1"/>
    <property type="molecule type" value="Genomic_DNA"/>
</dbReference>
<dbReference type="EMBL" id="CP002686">
    <property type="protein sequence ID" value="AEE79717.1"/>
    <property type="molecule type" value="Genomic_DNA"/>
</dbReference>
<dbReference type="EMBL" id="AY086384">
    <property type="protein sequence ID" value="AAM64451.1"/>
    <property type="molecule type" value="mRNA"/>
</dbReference>
<dbReference type="PIR" id="T46014">
    <property type="entry name" value="T46014"/>
</dbReference>
<dbReference type="RefSeq" id="NP_191351.1">
    <property type="nucleotide sequence ID" value="NM_115654.3"/>
</dbReference>
<dbReference type="SMR" id="Q9M2Q6"/>
<dbReference type="BioGRID" id="10276">
    <property type="interactions" value="6"/>
</dbReference>
<dbReference type="FunCoup" id="Q9M2Q6">
    <property type="interactions" value="60"/>
</dbReference>
<dbReference type="IntAct" id="Q9M2Q6">
    <property type="interactions" value="7"/>
</dbReference>
<dbReference type="STRING" id="3702.Q9M2Q6"/>
<dbReference type="PaxDb" id="3702-AT3G57920.1"/>
<dbReference type="EnsemblPlants" id="AT3G57920.1">
    <property type="protein sequence ID" value="AT3G57920.1"/>
    <property type="gene ID" value="AT3G57920"/>
</dbReference>
<dbReference type="GeneID" id="824961"/>
<dbReference type="Gramene" id="AT3G57920.1">
    <property type="protein sequence ID" value="AT3G57920.1"/>
    <property type="gene ID" value="AT3G57920"/>
</dbReference>
<dbReference type="KEGG" id="ath:AT3G57920"/>
<dbReference type="Araport" id="AT3G57920"/>
<dbReference type="TAIR" id="AT3G57920">
    <property type="gene designation" value="SPL15"/>
</dbReference>
<dbReference type="eggNOG" id="ENOG502QPVZ">
    <property type="taxonomic scope" value="Eukaryota"/>
</dbReference>
<dbReference type="HOGENOM" id="CLU_057950_1_0_1"/>
<dbReference type="InParanoid" id="Q9M2Q6"/>
<dbReference type="OMA" id="YMEPENT"/>
<dbReference type="PhylomeDB" id="Q9M2Q6"/>
<dbReference type="PRO" id="PR:Q9M2Q6"/>
<dbReference type="Proteomes" id="UP000006548">
    <property type="component" value="Chromosome 3"/>
</dbReference>
<dbReference type="ExpressionAtlas" id="Q9M2Q6">
    <property type="expression patterns" value="differential"/>
</dbReference>
<dbReference type="GO" id="GO:0005634">
    <property type="term" value="C:nucleus"/>
    <property type="evidence" value="ECO:0007669"/>
    <property type="project" value="UniProtKB-SubCell"/>
</dbReference>
<dbReference type="GO" id="GO:0003677">
    <property type="term" value="F:DNA binding"/>
    <property type="evidence" value="ECO:0007669"/>
    <property type="project" value="UniProtKB-KW"/>
</dbReference>
<dbReference type="GO" id="GO:0003700">
    <property type="term" value="F:DNA-binding transcription factor activity"/>
    <property type="evidence" value="ECO:0000250"/>
    <property type="project" value="TAIR"/>
</dbReference>
<dbReference type="GO" id="GO:0008270">
    <property type="term" value="F:zinc ion binding"/>
    <property type="evidence" value="ECO:0007669"/>
    <property type="project" value="UniProtKB-KW"/>
</dbReference>
<dbReference type="GO" id="GO:0048653">
    <property type="term" value="P:anther development"/>
    <property type="evidence" value="ECO:0000316"/>
    <property type="project" value="TAIR"/>
</dbReference>
<dbReference type="GO" id="GO:0042127">
    <property type="term" value="P:regulation of cell population proliferation"/>
    <property type="evidence" value="ECO:0000315"/>
    <property type="project" value="TAIR"/>
</dbReference>
<dbReference type="GO" id="GO:0008361">
    <property type="term" value="P:regulation of cell size"/>
    <property type="evidence" value="ECO:0000315"/>
    <property type="project" value="TAIR"/>
</dbReference>
<dbReference type="GO" id="GO:0006355">
    <property type="term" value="P:regulation of DNA-templated transcription"/>
    <property type="evidence" value="ECO:0000304"/>
    <property type="project" value="TAIR"/>
</dbReference>
<dbReference type="FunFam" id="4.10.1100.10:FF:000001">
    <property type="entry name" value="Squamosa promoter-binding-like protein 14"/>
    <property type="match status" value="1"/>
</dbReference>
<dbReference type="Gene3D" id="4.10.1100.10">
    <property type="entry name" value="Transcription factor, SBP-box domain"/>
    <property type="match status" value="1"/>
</dbReference>
<dbReference type="InterPro" id="IPR044817">
    <property type="entry name" value="SBP-like"/>
</dbReference>
<dbReference type="InterPro" id="IPR004333">
    <property type="entry name" value="SBP_dom"/>
</dbReference>
<dbReference type="InterPro" id="IPR036893">
    <property type="entry name" value="SBP_sf"/>
</dbReference>
<dbReference type="PANTHER" id="PTHR31251:SF98">
    <property type="entry name" value="SQUAMOSA PROMOTER-BINDING-LIKE PROTEIN 15"/>
    <property type="match status" value="1"/>
</dbReference>
<dbReference type="PANTHER" id="PTHR31251">
    <property type="entry name" value="SQUAMOSA PROMOTER-BINDING-LIKE PROTEIN 4"/>
    <property type="match status" value="1"/>
</dbReference>
<dbReference type="Pfam" id="PF03110">
    <property type="entry name" value="SBP"/>
    <property type="match status" value="1"/>
</dbReference>
<dbReference type="SUPFAM" id="SSF103612">
    <property type="entry name" value="SBT domain"/>
    <property type="match status" value="1"/>
</dbReference>
<dbReference type="PROSITE" id="PS51141">
    <property type="entry name" value="ZF_SBP"/>
    <property type="match status" value="1"/>
</dbReference>
<gene>
    <name type="primary">SPL15</name>
    <name type="ordered locus">At3g57920</name>
    <name type="ORF">T10K17.130</name>
</gene>
<evidence type="ECO:0000250" key="1"/>
<evidence type="ECO:0000255" key="2"/>
<evidence type="ECO:0000255" key="3">
    <source>
        <dbReference type="PROSITE-ProRule" id="PRU00470"/>
    </source>
</evidence>
<evidence type="ECO:0000256" key="4">
    <source>
        <dbReference type="SAM" id="MobiDB-lite"/>
    </source>
</evidence>
<evidence type="ECO:0000269" key="5">
    <source>
    </source>
</evidence>
<evidence type="ECO:0000269" key="6">
    <source>
    </source>
</evidence>
<evidence type="ECO:0000305" key="7">
    <source>
    </source>
</evidence>
<comment type="function">
    <text evidence="1">Trans-acting factor that binds specifically to the consensus nucleotide sequence 5'-TNCGTACAA-3'.</text>
</comment>
<comment type="cofactor">
    <cofactor evidence="1">
        <name>Zn(2+)</name>
        <dbReference type="ChEBI" id="CHEBI:29105"/>
    </cofactor>
    <text evidence="1">Binds 2 Zn(2+) ions per subunit.</text>
</comment>
<comment type="interaction">
    <interactant intactId="EBI-15196945">
        <id>Q9M2Q6</id>
    </interactant>
    <interactant intactId="EBI-15192325">
        <id>Q8LPR5</id>
        <label>TCP4</label>
    </interactant>
    <organismsDiffer>false</organismsDiffer>
    <experiments>3</experiments>
</comment>
<comment type="subcellular location">
    <subcellularLocation>
        <location evidence="6">Nucleus</location>
    </subcellularLocation>
</comment>
<comment type="developmental stage">
    <text evidence="5">Weak increase of expression during floral induction.</text>
</comment>
<comment type="induction">
    <text evidence="7">Negatively regulated by microRNAs miR157.</text>
</comment>
<comment type="domain">
    <text>The SBP-type zinc finger is required for the binding to DNA.</text>
</comment>
<keyword id="KW-0238">DNA-binding</keyword>
<keyword id="KW-0479">Metal-binding</keyword>
<keyword id="KW-0539">Nucleus</keyword>
<keyword id="KW-1185">Reference proteome</keyword>
<keyword id="KW-0804">Transcription</keyword>
<keyword id="KW-0805">Transcription regulation</keyword>
<keyword id="KW-0862">Zinc</keyword>
<keyword id="KW-0863">Zinc-finger</keyword>